<name>TOLB_CERS1</name>
<sequence>MTLFRTLAPMGLALALLLPAAVPAAAQQGPLRIQITEGVIEPLPFAVPDFVAENAGASELARDMARVIASDLSGTGLFREIPASAHISRVTSFEAPVAYGDWKAINAQALITGSVSASGDRVVVKFRLYDVFSDQPLGEGLQFAGSASGWRRMAHKVADVAYSRITGEGGYFDSRVVFVSESGPKNARAKRLAVMDYDGANVQYLTDSSSIVLAPRFSPTGDRILFTSYSTGFPRIYLMDVGSLATRGLAEQPGTMTFAPRFAPDGRTVAFSLEQGGNTDIYTLDTGSGTRRQLTNSPSIETAPSYSPDGSQIVFESDRSGGQQLYIMPAGGGEPRRISNGAGRYGTPVWSPRGDLIAFTKQHQGRFHIGVMRTDGSEERLLTASFLDEGPTWAPNGRVLMFTREGAGAGGQPALYSVDISGRNLKKVPLSVPASDPAWSPLLP</sequence>
<accession>A3PM58</accession>
<keyword id="KW-0131">Cell cycle</keyword>
<keyword id="KW-0132">Cell division</keyword>
<keyword id="KW-0574">Periplasm</keyword>
<keyword id="KW-0732">Signal</keyword>
<comment type="function">
    <text evidence="1">Part of the Tol-Pal system, which plays a role in outer membrane invagination during cell division and is important for maintaining outer membrane integrity.</text>
</comment>
<comment type="subunit">
    <text evidence="1">The Tol-Pal system is composed of five core proteins: the inner membrane proteins TolA, TolQ and TolR, the periplasmic protein TolB and the outer membrane protein Pal. They form a network linking the inner and outer membranes and the peptidoglycan layer.</text>
</comment>
<comment type="subcellular location">
    <subcellularLocation>
        <location evidence="1">Periplasm</location>
    </subcellularLocation>
</comment>
<comment type="similarity">
    <text evidence="1">Belongs to the TolB family.</text>
</comment>
<organism>
    <name type="scientific">Cereibacter sphaeroides (strain ATCC 17029 / ATH 2.4.9)</name>
    <name type="common">Rhodobacter sphaeroides</name>
    <dbReference type="NCBI Taxonomy" id="349101"/>
    <lineage>
        <taxon>Bacteria</taxon>
        <taxon>Pseudomonadati</taxon>
        <taxon>Pseudomonadota</taxon>
        <taxon>Alphaproteobacteria</taxon>
        <taxon>Rhodobacterales</taxon>
        <taxon>Paracoccaceae</taxon>
        <taxon>Cereibacter</taxon>
    </lineage>
</organism>
<evidence type="ECO:0000255" key="1">
    <source>
        <dbReference type="HAMAP-Rule" id="MF_00671"/>
    </source>
</evidence>
<evidence type="ECO:0000256" key="2">
    <source>
        <dbReference type="SAM" id="MobiDB-lite"/>
    </source>
</evidence>
<proteinExistence type="inferred from homology"/>
<gene>
    <name evidence="1" type="primary">tolB</name>
    <name type="ordered locus">Rsph17029_2322</name>
</gene>
<protein>
    <recommendedName>
        <fullName evidence="1">Tol-Pal system protein TolB</fullName>
    </recommendedName>
</protein>
<dbReference type="EMBL" id="CP000577">
    <property type="protein sequence ID" value="ABN77424.1"/>
    <property type="molecule type" value="Genomic_DNA"/>
</dbReference>
<dbReference type="RefSeq" id="WP_002720849.1">
    <property type="nucleotide sequence ID" value="NC_009049.1"/>
</dbReference>
<dbReference type="SMR" id="A3PM58"/>
<dbReference type="GeneID" id="67447417"/>
<dbReference type="KEGG" id="rsh:Rsph17029_2322"/>
<dbReference type="HOGENOM" id="CLU_047123_0_0_5"/>
<dbReference type="GO" id="GO:0042597">
    <property type="term" value="C:periplasmic space"/>
    <property type="evidence" value="ECO:0007669"/>
    <property type="project" value="UniProtKB-SubCell"/>
</dbReference>
<dbReference type="GO" id="GO:0051301">
    <property type="term" value="P:cell division"/>
    <property type="evidence" value="ECO:0007669"/>
    <property type="project" value="UniProtKB-UniRule"/>
</dbReference>
<dbReference type="GO" id="GO:0017038">
    <property type="term" value="P:protein import"/>
    <property type="evidence" value="ECO:0007669"/>
    <property type="project" value="InterPro"/>
</dbReference>
<dbReference type="Gene3D" id="2.120.10.30">
    <property type="entry name" value="TolB, C-terminal domain"/>
    <property type="match status" value="1"/>
</dbReference>
<dbReference type="Gene3D" id="3.40.50.10070">
    <property type="entry name" value="TolB, N-terminal domain"/>
    <property type="match status" value="1"/>
</dbReference>
<dbReference type="HAMAP" id="MF_00671">
    <property type="entry name" value="TolB"/>
    <property type="match status" value="1"/>
</dbReference>
<dbReference type="InterPro" id="IPR011042">
    <property type="entry name" value="6-blade_b-propeller_TolB-like"/>
</dbReference>
<dbReference type="InterPro" id="IPR011659">
    <property type="entry name" value="PD40"/>
</dbReference>
<dbReference type="InterPro" id="IPR014167">
    <property type="entry name" value="Tol-Pal_TolB"/>
</dbReference>
<dbReference type="InterPro" id="IPR007195">
    <property type="entry name" value="TolB_N"/>
</dbReference>
<dbReference type="NCBIfam" id="TIGR02800">
    <property type="entry name" value="propeller_TolB"/>
    <property type="match status" value="1"/>
</dbReference>
<dbReference type="PANTHER" id="PTHR36842:SF1">
    <property type="entry name" value="PROTEIN TOLB"/>
    <property type="match status" value="1"/>
</dbReference>
<dbReference type="PANTHER" id="PTHR36842">
    <property type="entry name" value="PROTEIN TOLB HOMOLOG"/>
    <property type="match status" value="1"/>
</dbReference>
<dbReference type="Pfam" id="PF07676">
    <property type="entry name" value="PD40"/>
    <property type="match status" value="5"/>
</dbReference>
<dbReference type="Pfam" id="PF04052">
    <property type="entry name" value="TolB_N"/>
    <property type="match status" value="1"/>
</dbReference>
<dbReference type="SUPFAM" id="SSF52964">
    <property type="entry name" value="TolB, N-terminal domain"/>
    <property type="match status" value="1"/>
</dbReference>
<dbReference type="SUPFAM" id="SSF69304">
    <property type="entry name" value="Tricorn protease N-terminal domain"/>
    <property type="match status" value="1"/>
</dbReference>
<reference key="1">
    <citation type="submission" date="2007-02" db="EMBL/GenBank/DDBJ databases">
        <title>Complete sequence of chromosome 1 of Rhodobacter sphaeroides ATCC 17029.</title>
        <authorList>
            <person name="Copeland A."/>
            <person name="Lucas S."/>
            <person name="Lapidus A."/>
            <person name="Barry K."/>
            <person name="Detter J.C."/>
            <person name="Glavina del Rio T."/>
            <person name="Hammon N."/>
            <person name="Israni S."/>
            <person name="Dalin E."/>
            <person name="Tice H."/>
            <person name="Pitluck S."/>
            <person name="Kiss H."/>
            <person name="Brettin T."/>
            <person name="Bruce D."/>
            <person name="Han C."/>
            <person name="Tapia R."/>
            <person name="Gilna P."/>
            <person name="Schmutz J."/>
            <person name="Larimer F."/>
            <person name="Land M."/>
            <person name="Hauser L."/>
            <person name="Kyrpides N."/>
            <person name="Mikhailova N."/>
            <person name="Richardson P."/>
            <person name="Mackenzie C."/>
            <person name="Choudhary M."/>
            <person name="Donohue T.J."/>
            <person name="Kaplan S."/>
        </authorList>
    </citation>
    <scope>NUCLEOTIDE SEQUENCE [LARGE SCALE GENOMIC DNA]</scope>
    <source>
        <strain>ATCC 17029 / ATH 2.4.9</strain>
    </source>
</reference>
<feature type="signal peptide" evidence="1">
    <location>
        <begin position="1"/>
        <end position="26"/>
    </location>
</feature>
<feature type="chain" id="PRO_5000227665" description="Tol-Pal system protein TolB" evidence="1">
    <location>
        <begin position="27"/>
        <end position="444"/>
    </location>
</feature>
<feature type="region of interest" description="Disordered" evidence="2">
    <location>
        <begin position="281"/>
        <end position="311"/>
    </location>
</feature>
<feature type="compositionally biased region" description="Polar residues" evidence="2">
    <location>
        <begin position="281"/>
        <end position="310"/>
    </location>
</feature>